<proteinExistence type="inferred from homology"/>
<feature type="chain" id="PRO_0000415298" description="HTH-type transcriptional repressor NanR">
    <location>
        <begin position="1"/>
        <end position="260"/>
    </location>
</feature>
<feature type="domain" description="HTH gntR-type" evidence="1">
    <location>
        <begin position="27"/>
        <end position="95"/>
    </location>
</feature>
<feature type="DNA-binding region" description="H-T-H motif" evidence="1">
    <location>
        <begin position="55"/>
        <end position="74"/>
    </location>
</feature>
<comment type="function">
    <text evidence="1">Transcriptional repressor that controls expression of the genes required for the catabolism of sialic acids.</text>
</comment>
<comment type="similarity">
    <text evidence="1">Belongs to the NanR family.</text>
</comment>
<accession>E0T5H9</accession>
<evidence type="ECO:0000255" key="1">
    <source>
        <dbReference type="HAMAP-Rule" id="MF_01236"/>
    </source>
</evidence>
<gene>
    <name evidence="1" type="primary">nanR</name>
    <name type="ordered locus">ETAF_1283</name>
</gene>
<reference key="1">
    <citation type="submission" date="2010-08" db="EMBL/GenBank/DDBJ databases">
        <title>Genome comparisons of Edwardsiella bacteria analysed using deep sequencing technology.</title>
        <authorList>
            <person name="van Soest J.J."/>
            <person name="Henkel C.V."/>
            <person name="Jansen H.J."/>
            <person name="van den Hondel C.A.M.J.J."/>
            <person name="Bloemberg G.V."/>
            <person name="Meijer A.H."/>
            <person name="Spaink H.P."/>
        </authorList>
    </citation>
    <scope>NUCLEOTIDE SEQUENCE [LARGE SCALE GENOMIC DNA]</scope>
    <source>
        <strain>FL6-60</strain>
    </source>
</reference>
<organism>
    <name type="scientific">Edwardsiella tarda (strain FL6-60)</name>
    <dbReference type="NCBI Taxonomy" id="718251"/>
    <lineage>
        <taxon>Bacteria</taxon>
        <taxon>Pseudomonadati</taxon>
        <taxon>Pseudomonadota</taxon>
        <taxon>Gammaproteobacteria</taxon>
        <taxon>Enterobacterales</taxon>
        <taxon>Hafniaceae</taxon>
        <taxon>Edwardsiella</taxon>
    </lineage>
</organism>
<sequence>MNDFDPTTLSSPAAIGHNLRRRPLVRKKLSEMVEEELEQMIRRREFGEGEQLPSERELMAFFNVGRPSVREALAALKRKGLVQINNGERARISRPSADTIIGELSGMAKDFLSHPGGIAHFEQLRLFFESSLVRYAAEHATDAQIALLEQTLALNSQSLDDNALFIRSDVDFHRVLAGIPGNPIFMAIHVALLDWLLAARPAVADADLYEHNNTSYQQHIEIFNAIRRHDPDQADRALQTHLNSVFASWHTLSAQSSSDE</sequence>
<dbReference type="EMBL" id="CP002154">
    <property type="protein sequence ID" value="ADM41395.1"/>
    <property type="molecule type" value="Genomic_DNA"/>
</dbReference>
<dbReference type="SMR" id="E0T5H9"/>
<dbReference type="KEGG" id="etd:ETAF_1283"/>
<dbReference type="PATRIC" id="fig|718251.5.peg.1326"/>
<dbReference type="HOGENOM" id="CLU_017584_9_1_6"/>
<dbReference type="Proteomes" id="UP000002230">
    <property type="component" value="Chromosome"/>
</dbReference>
<dbReference type="GO" id="GO:0003677">
    <property type="term" value="F:DNA binding"/>
    <property type="evidence" value="ECO:0007669"/>
    <property type="project" value="UniProtKB-KW"/>
</dbReference>
<dbReference type="GO" id="GO:0003700">
    <property type="term" value="F:DNA-binding transcription factor activity"/>
    <property type="evidence" value="ECO:0007669"/>
    <property type="project" value="UniProtKB-UniRule"/>
</dbReference>
<dbReference type="GO" id="GO:0045892">
    <property type="term" value="P:negative regulation of DNA-templated transcription"/>
    <property type="evidence" value="ECO:0007669"/>
    <property type="project" value="UniProtKB-UniRule"/>
</dbReference>
<dbReference type="CDD" id="cd07377">
    <property type="entry name" value="WHTH_GntR"/>
    <property type="match status" value="1"/>
</dbReference>
<dbReference type="FunFam" id="1.10.10.10:FF:000150">
    <property type="entry name" value="HTH-type transcriptional repressor NanR"/>
    <property type="match status" value="1"/>
</dbReference>
<dbReference type="Gene3D" id="1.20.120.530">
    <property type="entry name" value="GntR ligand-binding domain-like"/>
    <property type="match status" value="1"/>
</dbReference>
<dbReference type="Gene3D" id="1.10.10.10">
    <property type="entry name" value="Winged helix-like DNA-binding domain superfamily/Winged helix DNA-binding domain"/>
    <property type="match status" value="1"/>
</dbReference>
<dbReference type="HAMAP" id="MF_01236">
    <property type="entry name" value="HTH_NanR"/>
    <property type="match status" value="1"/>
</dbReference>
<dbReference type="InterPro" id="IPR011711">
    <property type="entry name" value="GntR_C"/>
</dbReference>
<dbReference type="InterPro" id="IPR008920">
    <property type="entry name" value="TF_FadR/GntR_C"/>
</dbReference>
<dbReference type="InterPro" id="IPR000524">
    <property type="entry name" value="Tscrpt_reg_HTH_GntR"/>
</dbReference>
<dbReference type="InterPro" id="IPR023730">
    <property type="entry name" value="Tscrpt_reg_NanR"/>
</dbReference>
<dbReference type="InterPro" id="IPR036388">
    <property type="entry name" value="WH-like_DNA-bd_sf"/>
</dbReference>
<dbReference type="InterPro" id="IPR036390">
    <property type="entry name" value="WH_DNA-bd_sf"/>
</dbReference>
<dbReference type="NCBIfam" id="NF003011">
    <property type="entry name" value="PRK03837.1"/>
    <property type="match status" value="1"/>
</dbReference>
<dbReference type="PANTHER" id="PTHR43537:SF53">
    <property type="entry name" value="HTH-TYPE TRANSCRIPTIONAL REPRESSOR NANR"/>
    <property type="match status" value="1"/>
</dbReference>
<dbReference type="PANTHER" id="PTHR43537">
    <property type="entry name" value="TRANSCRIPTIONAL REGULATOR, GNTR FAMILY"/>
    <property type="match status" value="1"/>
</dbReference>
<dbReference type="Pfam" id="PF07729">
    <property type="entry name" value="FCD"/>
    <property type="match status" value="1"/>
</dbReference>
<dbReference type="Pfam" id="PF00392">
    <property type="entry name" value="GntR"/>
    <property type="match status" value="1"/>
</dbReference>
<dbReference type="PRINTS" id="PR00035">
    <property type="entry name" value="HTHGNTR"/>
</dbReference>
<dbReference type="SMART" id="SM00895">
    <property type="entry name" value="FCD"/>
    <property type="match status" value="1"/>
</dbReference>
<dbReference type="SMART" id="SM00345">
    <property type="entry name" value="HTH_GNTR"/>
    <property type="match status" value="1"/>
</dbReference>
<dbReference type="SUPFAM" id="SSF48008">
    <property type="entry name" value="GntR ligand-binding domain-like"/>
    <property type="match status" value="1"/>
</dbReference>
<dbReference type="SUPFAM" id="SSF46785">
    <property type="entry name" value="Winged helix' DNA-binding domain"/>
    <property type="match status" value="1"/>
</dbReference>
<dbReference type="PROSITE" id="PS50949">
    <property type="entry name" value="HTH_GNTR"/>
    <property type="match status" value="1"/>
</dbReference>
<keyword id="KW-0238">DNA-binding</keyword>
<keyword id="KW-1185">Reference proteome</keyword>
<keyword id="KW-0678">Repressor</keyword>
<keyword id="KW-0804">Transcription</keyword>
<keyword id="KW-0805">Transcription regulation</keyword>
<protein>
    <recommendedName>
        <fullName evidence="1">HTH-type transcriptional repressor NanR</fullName>
    </recommendedName>
</protein>
<name>NANR_EDWTF</name>